<feature type="chain" id="PRO_0000339484" description="ATP synthase subunit beta">
    <location>
        <begin position="1"/>
        <end position="521"/>
    </location>
</feature>
<feature type="region of interest" description="Disordered" evidence="2">
    <location>
        <begin position="1"/>
        <end position="42"/>
    </location>
</feature>
<feature type="compositionally biased region" description="Low complexity" evidence="2">
    <location>
        <begin position="1"/>
        <end position="21"/>
    </location>
</feature>
<feature type="compositionally biased region" description="Low complexity" evidence="2">
    <location>
        <begin position="28"/>
        <end position="42"/>
    </location>
</feature>
<feature type="binding site" evidence="1">
    <location>
        <begin position="199"/>
        <end position="206"/>
    </location>
    <ligand>
        <name>ATP</name>
        <dbReference type="ChEBI" id="CHEBI:30616"/>
    </ligand>
</feature>
<proteinExistence type="inferred from homology"/>
<name>ATPB_BRUO2</name>
<gene>
    <name evidence="1" type="primary">atpD</name>
    <name type="ordered locus">BOV_1732</name>
</gene>
<reference key="1">
    <citation type="journal article" date="2009" name="PLoS ONE">
        <title>Genome degradation in Brucella ovis corresponds with narrowing of its host range and tissue tropism.</title>
        <authorList>
            <person name="Tsolis R.M."/>
            <person name="Seshadri R."/>
            <person name="Santos R.L."/>
            <person name="Sangari F.J."/>
            <person name="Lobo J.M."/>
            <person name="de Jong M.F."/>
            <person name="Ren Q."/>
            <person name="Myers G."/>
            <person name="Brinkac L.M."/>
            <person name="Nelson W.C."/>
            <person name="Deboy R.T."/>
            <person name="Angiuoli S."/>
            <person name="Khouri H."/>
            <person name="Dimitrov G."/>
            <person name="Robinson J.R."/>
            <person name="Mulligan S."/>
            <person name="Walker R.L."/>
            <person name="Elzer P.E."/>
            <person name="Hassan K.A."/>
            <person name="Paulsen I.T."/>
        </authorList>
    </citation>
    <scope>NUCLEOTIDE SEQUENCE [LARGE SCALE GENOMIC DNA]</scope>
    <source>
        <strain>ATCC 25840 / 63/290 / NCTC 10512</strain>
    </source>
</reference>
<evidence type="ECO:0000255" key="1">
    <source>
        <dbReference type="HAMAP-Rule" id="MF_01347"/>
    </source>
</evidence>
<evidence type="ECO:0000256" key="2">
    <source>
        <dbReference type="SAM" id="MobiDB-lite"/>
    </source>
</evidence>
<comment type="function">
    <text evidence="1">Produces ATP from ADP in the presence of a proton gradient across the membrane. The catalytic sites are hosted primarily by the beta subunits.</text>
</comment>
<comment type="catalytic activity">
    <reaction evidence="1">
        <text>ATP + H2O + 4 H(+)(in) = ADP + phosphate + 5 H(+)(out)</text>
        <dbReference type="Rhea" id="RHEA:57720"/>
        <dbReference type="ChEBI" id="CHEBI:15377"/>
        <dbReference type="ChEBI" id="CHEBI:15378"/>
        <dbReference type="ChEBI" id="CHEBI:30616"/>
        <dbReference type="ChEBI" id="CHEBI:43474"/>
        <dbReference type="ChEBI" id="CHEBI:456216"/>
        <dbReference type="EC" id="7.1.2.2"/>
    </reaction>
</comment>
<comment type="subunit">
    <text evidence="1">F-type ATPases have 2 components, CF(1) - the catalytic core - and CF(0) - the membrane proton channel. CF(1) has five subunits: alpha(3), beta(3), gamma(1), delta(1), epsilon(1). CF(0) has three main subunits: a(1), b(2) and c(9-12). The alpha and beta chains form an alternating ring which encloses part of the gamma chain. CF(1) is attached to CF(0) by a central stalk formed by the gamma and epsilon chains, while a peripheral stalk is formed by the delta and b chains.</text>
</comment>
<comment type="subcellular location">
    <subcellularLocation>
        <location evidence="1">Cell inner membrane</location>
        <topology evidence="1">Peripheral membrane protein</topology>
    </subcellularLocation>
</comment>
<comment type="similarity">
    <text evidence="1">Belongs to the ATPase alpha/beta chains family.</text>
</comment>
<keyword id="KW-0066">ATP synthesis</keyword>
<keyword id="KW-0067">ATP-binding</keyword>
<keyword id="KW-0997">Cell inner membrane</keyword>
<keyword id="KW-1003">Cell membrane</keyword>
<keyword id="KW-0139">CF(1)</keyword>
<keyword id="KW-0375">Hydrogen ion transport</keyword>
<keyword id="KW-0406">Ion transport</keyword>
<keyword id="KW-0472">Membrane</keyword>
<keyword id="KW-0547">Nucleotide-binding</keyword>
<keyword id="KW-1278">Translocase</keyword>
<keyword id="KW-0813">Transport</keyword>
<accession>A5VSE1</accession>
<organism>
    <name type="scientific">Brucella ovis (strain ATCC 25840 / 63/290 / NCTC 10512)</name>
    <dbReference type="NCBI Taxonomy" id="444178"/>
    <lineage>
        <taxon>Bacteria</taxon>
        <taxon>Pseudomonadati</taxon>
        <taxon>Pseudomonadota</taxon>
        <taxon>Alphaproteobacteria</taxon>
        <taxon>Hyphomicrobiales</taxon>
        <taxon>Brucellaceae</taxon>
        <taxon>Brucella/Ochrobactrum group</taxon>
        <taxon>Brucella</taxon>
    </lineage>
</organism>
<dbReference type="EC" id="7.1.2.2" evidence="1"/>
<dbReference type="EMBL" id="CP000708">
    <property type="protein sequence ID" value="ABQ60562.1"/>
    <property type="molecule type" value="Genomic_DNA"/>
</dbReference>
<dbReference type="RefSeq" id="WP_004684261.1">
    <property type="nucleotide sequence ID" value="NC_009505.1"/>
</dbReference>
<dbReference type="SMR" id="A5VSE1"/>
<dbReference type="GeneID" id="97533076"/>
<dbReference type="KEGG" id="bov:BOV_1732"/>
<dbReference type="HOGENOM" id="CLU_022398_0_2_5"/>
<dbReference type="PhylomeDB" id="A5VSE1"/>
<dbReference type="Proteomes" id="UP000006383">
    <property type="component" value="Chromosome I"/>
</dbReference>
<dbReference type="GO" id="GO:0005886">
    <property type="term" value="C:plasma membrane"/>
    <property type="evidence" value="ECO:0007669"/>
    <property type="project" value="UniProtKB-SubCell"/>
</dbReference>
<dbReference type="GO" id="GO:0045259">
    <property type="term" value="C:proton-transporting ATP synthase complex"/>
    <property type="evidence" value="ECO:0007669"/>
    <property type="project" value="UniProtKB-KW"/>
</dbReference>
<dbReference type="GO" id="GO:0005524">
    <property type="term" value="F:ATP binding"/>
    <property type="evidence" value="ECO:0007669"/>
    <property type="project" value="UniProtKB-UniRule"/>
</dbReference>
<dbReference type="GO" id="GO:0016887">
    <property type="term" value="F:ATP hydrolysis activity"/>
    <property type="evidence" value="ECO:0007669"/>
    <property type="project" value="InterPro"/>
</dbReference>
<dbReference type="GO" id="GO:0046933">
    <property type="term" value="F:proton-transporting ATP synthase activity, rotational mechanism"/>
    <property type="evidence" value="ECO:0007669"/>
    <property type="project" value="UniProtKB-UniRule"/>
</dbReference>
<dbReference type="CDD" id="cd18110">
    <property type="entry name" value="ATP-synt_F1_beta_C"/>
    <property type="match status" value="1"/>
</dbReference>
<dbReference type="CDD" id="cd18115">
    <property type="entry name" value="ATP-synt_F1_beta_N"/>
    <property type="match status" value="1"/>
</dbReference>
<dbReference type="CDD" id="cd01133">
    <property type="entry name" value="F1-ATPase_beta_CD"/>
    <property type="match status" value="1"/>
</dbReference>
<dbReference type="FunFam" id="1.10.1140.10:FF:000001">
    <property type="entry name" value="ATP synthase subunit beta"/>
    <property type="match status" value="1"/>
</dbReference>
<dbReference type="FunFam" id="2.40.10.170:FF:000005">
    <property type="entry name" value="ATP synthase subunit beta"/>
    <property type="match status" value="1"/>
</dbReference>
<dbReference type="FunFam" id="3.40.50.300:FF:000026">
    <property type="entry name" value="ATP synthase subunit beta"/>
    <property type="match status" value="1"/>
</dbReference>
<dbReference type="Gene3D" id="2.40.10.170">
    <property type="match status" value="1"/>
</dbReference>
<dbReference type="Gene3D" id="1.10.1140.10">
    <property type="entry name" value="Bovine Mitochondrial F1-atpase, Atp Synthase Beta Chain, Chain D, domain 3"/>
    <property type="match status" value="1"/>
</dbReference>
<dbReference type="Gene3D" id="3.40.50.300">
    <property type="entry name" value="P-loop containing nucleotide triphosphate hydrolases"/>
    <property type="match status" value="1"/>
</dbReference>
<dbReference type="HAMAP" id="MF_01347">
    <property type="entry name" value="ATP_synth_beta_bact"/>
    <property type="match status" value="1"/>
</dbReference>
<dbReference type="InterPro" id="IPR003593">
    <property type="entry name" value="AAA+_ATPase"/>
</dbReference>
<dbReference type="InterPro" id="IPR055190">
    <property type="entry name" value="ATP-synt_VA_C"/>
</dbReference>
<dbReference type="InterPro" id="IPR005722">
    <property type="entry name" value="ATP_synth_F1_bsu"/>
</dbReference>
<dbReference type="InterPro" id="IPR020003">
    <property type="entry name" value="ATPase_a/bsu_AS"/>
</dbReference>
<dbReference type="InterPro" id="IPR050053">
    <property type="entry name" value="ATPase_alpha/beta_chains"/>
</dbReference>
<dbReference type="InterPro" id="IPR004100">
    <property type="entry name" value="ATPase_F1/V1/A1_a/bsu_N"/>
</dbReference>
<dbReference type="InterPro" id="IPR036121">
    <property type="entry name" value="ATPase_F1/V1/A1_a/bsu_N_sf"/>
</dbReference>
<dbReference type="InterPro" id="IPR000194">
    <property type="entry name" value="ATPase_F1/V1/A1_a/bsu_nucl-bd"/>
</dbReference>
<dbReference type="InterPro" id="IPR024034">
    <property type="entry name" value="ATPase_F1/V1_b/a_C"/>
</dbReference>
<dbReference type="InterPro" id="IPR027417">
    <property type="entry name" value="P-loop_NTPase"/>
</dbReference>
<dbReference type="NCBIfam" id="TIGR01039">
    <property type="entry name" value="atpD"/>
    <property type="match status" value="1"/>
</dbReference>
<dbReference type="PANTHER" id="PTHR15184">
    <property type="entry name" value="ATP SYNTHASE"/>
    <property type="match status" value="1"/>
</dbReference>
<dbReference type="PANTHER" id="PTHR15184:SF71">
    <property type="entry name" value="ATP SYNTHASE SUBUNIT BETA, MITOCHONDRIAL"/>
    <property type="match status" value="1"/>
</dbReference>
<dbReference type="Pfam" id="PF00006">
    <property type="entry name" value="ATP-synt_ab"/>
    <property type="match status" value="1"/>
</dbReference>
<dbReference type="Pfam" id="PF02874">
    <property type="entry name" value="ATP-synt_ab_N"/>
    <property type="match status" value="1"/>
</dbReference>
<dbReference type="Pfam" id="PF22919">
    <property type="entry name" value="ATP-synt_VA_C"/>
    <property type="match status" value="1"/>
</dbReference>
<dbReference type="PIRSF" id="PIRSF039072">
    <property type="entry name" value="ATPase_subunit_beta"/>
    <property type="match status" value="1"/>
</dbReference>
<dbReference type="SMART" id="SM00382">
    <property type="entry name" value="AAA"/>
    <property type="match status" value="1"/>
</dbReference>
<dbReference type="SUPFAM" id="SSF47917">
    <property type="entry name" value="C-terminal domain of alpha and beta subunits of F1 ATP synthase"/>
    <property type="match status" value="1"/>
</dbReference>
<dbReference type="SUPFAM" id="SSF50615">
    <property type="entry name" value="N-terminal domain of alpha and beta subunits of F1 ATP synthase"/>
    <property type="match status" value="1"/>
</dbReference>
<dbReference type="SUPFAM" id="SSF52540">
    <property type="entry name" value="P-loop containing nucleoside triphosphate hydrolases"/>
    <property type="match status" value="1"/>
</dbReference>
<dbReference type="PROSITE" id="PS00152">
    <property type="entry name" value="ATPASE_ALPHA_BETA"/>
    <property type="match status" value="1"/>
</dbReference>
<sequence>MAKAATPKTTAAAEAKPAAKAPAKKAAPKTTAAAKPAATKSGAPKAAAAGAIGHITQVIGAVVDVKFPEGQLPLILNALEVDNQGHRLVLEVAQHLGEDTVRTIAMDATEGLVRGQEARDTGEPIMVPVGVETLGRIMNVIGEPVDEAGPIKTKATRAIHQNAPEYIEQSTEAEILVTGIKVVDLLAPYAKGGKIGLFGGAGVGKTVLIMELINNVAKAHGGYSVFAGVGERTREGNDLYHEMIESGVNKLGGGEGSKAALVYGQMNEPPGARARVALSGLTVAENFRDQGQDVLFFVDNIFRFTQAGSEVSALLGRIPSAVGYQPTLATDMGAMQERITTTTKGSITSVQAIYVPADDLTDPAPATSFAHLDATTVLSRSIAEKGIYPAVDPLDSTSRMLDPKVVGEEHYAVARQVQSILQRYKALQDIIAILGMDELSEEDKLTVARARKIERFLSQPFFVAEVFTGSPGKLVDLADTIKGFKGLCAGDYDHLPEAAFYMVGSIEEALEKAKKLAAEAA</sequence>
<protein>
    <recommendedName>
        <fullName evidence="1">ATP synthase subunit beta</fullName>
        <ecNumber evidence="1">7.1.2.2</ecNumber>
    </recommendedName>
    <alternativeName>
        <fullName evidence="1">ATP synthase F1 sector subunit beta</fullName>
    </alternativeName>
    <alternativeName>
        <fullName evidence="1">F-ATPase subunit beta</fullName>
    </alternativeName>
</protein>